<keyword id="KW-1015">Disulfide bond</keyword>
<keyword id="KW-0960">Knottin</keyword>
<keyword id="KW-0528">Neurotoxin</keyword>
<keyword id="KW-0964">Secreted</keyword>
<keyword id="KW-0732">Signal</keyword>
<keyword id="KW-0800">Toxin</keyword>
<organism>
    <name type="scientific">Conus tessulatus</name>
    <name type="common">Tessellate cone</name>
    <dbReference type="NCBI Taxonomy" id="101317"/>
    <lineage>
        <taxon>Eukaryota</taxon>
        <taxon>Metazoa</taxon>
        <taxon>Spiralia</taxon>
        <taxon>Lophotrochozoa</taxon>
        <taxon>Mollusca</taxon>
        <taxon>Gastropoda</taxon>
        <taxon>Caenogastropoda</taxon>
        <taxon>Neogastropoda</taxon>
        <taxon>Conoidea</taxon>
        <taxon>Conidae</taxon>
        <taxon>Conus</taxon>
        <taxon>Tesselliconus</taxon>
    </lineage>
</organism>
<evidence type="ECO:0000250" key="1"/>
<evidence type="ECO:0000255" key="2"/>
<evidence type="ECO:0000305" key="3"/>
<name>O263_CONTS</name>
<feature type="signal peptide" evidence="2">
    <location>
        <begin position="1"/>
        <end position="19"/>
    </location>
</feature>
<feature type="propeptide" id="PRO_0000404808" evidence="1">
    <location>
        <begin position="20"/>
        <end position="45"/>
    </location>
</feature>
<feature type="peptide" id="PRO_0000404809" description="Conotoxin TsMEKL-011">
    <location>
        <begin position="46"/>
        <end position="74"/>
    </location>
</feature>
<feature type="disulfide bond" evidence="1">
    <location>
        <begin position="49"/>
        <end position="63"/>
    </location>
</feature>
<feature type="disulfide bond" evidence="1">
    <location>
        <begin position="56"/>
        <end position="67"/>
    </location>
</feature>
<feature type="disulfide bond" evidence="1">
    <location>
        <begin position="62"/>
        <end position="71"/>
    </location>
</feature>
<comment type="subcellular location">
    <subcellularLocation>
        <location evidence="1">Secreted</location>
    </subcellularLocation>
</comment>
<comment type="tissue specificity">
    <text>Expressed by the venom duct.</text>
</comment>
<comment type="domain">
    <text evidence="1">The presence of a 'disulfide through disulfide knot' structurally defines this protein as a knottin.</text>
</comment>
<comment type="domain">
    <text>The cysteine framework is VI/VII (C-C-CC-C-C).</text>
</comment>
<comment type="similarity">
    <text evidence="3">Belongs to the conotoxin O2 superfamily.</text>
</comment>
<accession>Q9BPB9</accession>
<sequence>MEKLTILLLVAAVLMSTQALIQRGGAKRRKVNFFSIREPGAEDWREGNCTPWLGGCTSPEECCPGNCETYCRAWR</sequence>
<dbReference type="EMBL" id="AF215015">
    <property type="protein sequence ID" value="AAG60443.1"/>
    <property type="molecule type" value="mRNA"/>
</dbReference>
<dbReference type="SMR" id="Q9BPB9"/>
<dbReference type="ConoServer" id="702">
    <property type="toxin name" value="Ts6.3 precursor"/>
</dbReference>
<dbReference type="GO" id="GO:0005576">
    <property type="term" value="C:extracellular region"/>
    <property type="evidence" value="ECO:0007669"/>
    <property type="project" value="UniProtKB-SubCell"/>
</dbReference>
<dbReference type="GO" id="GO:0008200">
    <property type="term" value="F:ion channel inhibitor activity"/>
    <property type="evidence" value="ECO:0007669"/>
    <property type="project" value="InterPro"/>
</dbReference>
<dbReference type="GO" id="GO:0090729">
    <property type="term" value="F:toxin activity"/>
    <property type="evidence" value="ECO:0007669"/>
    <property type="project" value="UniProtKB-KW"/>
</dbReference>
<dbReference type="InterPro" id="IPR004214">
    <property type="entry name" value="Conotoxin"/>
</dbReference>
<dbReference type="Pfam" id="PF02950">
    <property type="entry name" value="Conotoxin"/>
    <property type="match status" value="1"/>
</dbReference>
<reference key="1">
    <citation type="journal article" date="2001" name="Mol. Biol. Evol.">
        <title>Mechanisms for evolving hypervariability: the case of conopeptides.</title>
        <authorList>
            <person name="Conticello S.G."/>
            <person name="Gilad Y."/>
            <person name="Avidan N."/>
            <person name="Ben-Asher E."/>
            <person name="Levy Z."/>
            <person name="Fainzilber M."/>
        </authorList>
    </citation>
    <scope>NUCLEOTIDE SEQUENCE [MRNA]</scope>
    <source>
        <tissue>Venom duct</tissue>
    </source>
</reference>
<protein>
    <recommendedName>
        <fullName>Conotoxin TsMEKL-011</fullName>
    </recommendedName>
</protein>
<proteinExistence type="evidence at transcript level"/>